<protein>
    <recommendedName>
        <fullName evidence="1">tRNA (guanine-N(1)-)-methyltransferase</fullName>
        <ecNumber evidence="1">2.1.1.228</ecNumber>
    </recommendedName>
    <alternativeName>
        <fullName evidence="1">M1G-methyltransferase</fullName>
    </alternativeName>
    <alternativeName>
        <fullName evidence="1">tRNA [GM37] methyltransferase</fullName>
    </alternativeName>
</protein>
<accession>B6J1N4</accession>
<feature type="chain" id="PRO_1000130156" description="tRNA (guanine-N(1)-)-methyltransferase">
    <location>
        <begin position="1"/>
        <end position="246"/>
    </location>
</feature>
<feature type="binding site" evidence="1">
    <location>
        <position position="114"/>
    </location>
    <ligand>
        <name>S-adenosyl-L-methionine</name>
        <dbReference type="ChEBI" id="CHEBI:59789"/>
    </ligand>
</feature>
<feature type="binding site" evidence="1">
    <location>
        <begin position="134"/>
        <end position="139"/>
    </location>
    <ligand>
        <name>S-adenosyl-L-methionine</name>
        <dbReference type="ChEBI" id="CHEBI:59789"/>
    </ligand>
</feature>
<name>TRMD_COXB2</name>
<comment type="function">
    <text evidence="1">Specifically methylates guanosine-37 in various tRNAs.</text>
</comment>
<comment type="catalytic activity">
    <reaction evidence="1">
        <text>guanosine(37) in tRNA + S-adenosyl-L-methionine = N(1)-methylguanosine(37) in tRNA + S-adenosyl-L-homocysteine + H(+)</text>
        <dbReference type="Rhea" id="RHEA:36899"/>
        <dbReference type="Rhea" id="RHEA-COMP:10145"/>
        <dbReference type="Rhea" id="RHEA-COMP:10147"/>
        <dbReference type="ChEBI" id="CHEBI:15378"/>
        <dbReference type="ChEBI" id="CHEBI:57856"/>
        <dbReference type="ChEBI" id="CHEBI:59789"/>
        <dbReference type="ChEBI" id="CHEBI:73542"/>
        <dbReference type="ChEBI" id="CHEBI:74269"/>
        <dbReference type="EC" id="2.1.1.228"/>
    </reaction>
</comment>
<comment type="subunit">
    <text evidence="1">Homodimer.</text>
</comment>
<comment type="subcellular location">
    <subcellularLocation>
        <location evidence="1">Cytoplasm</location>
    </subcellularLocation>
</comment>
<comment type="similarity">
    <text evidence="1">Belongs to the RNA methyltransferase TrmD family.</text>
</comment>
<reference key="1">
    <citation type="journal article" date="2009" name="Infect. Immun.">
        <title>Comparative genomics reveal extensive transposon-mediated genomic plasticity and diversity among potential effector proteins within the genus Coxiella.</title>
        <authorList>
            <person name="Beare P.A."/>
            <person name="Unsworth N."/>
            <person name="Andoh M."/>
            <person name="Voth D.E."/>
            <person name="Omsland A."/>
            <person name="Gilk S.D."/>
            <person name="Williams K.P."/>
            <person name="Sobral B.W."/>
            <person name="Kupko J.J. III"/>
            <person name="Porcella S.F."/>
            <person name="Samuel J.E."/>
            <person name="Heinzen R.A."/>
        </authorList>
    </citation>
    <scope>NUCLEOTIDE SEQUENCE [LARGE SCALE GENOMIC DNA]</scope>
    <source>
        <strain>CbuG_Q212</strain>
    </source>
</reference>
<organism>
    <name type="scientific">Coxiella burnetii (strain CbuG_Q212)</name>
    <name type="common">Coxiella burnetii (strain Q212)</name>
    <dbReference type="NCBI Taxonomy" id="434923"/>
    <lineage>
        <taxon>Bacteria</taxon>
        <taxon>Pseudomonadati</taxon>
        <taxon>Pseudomonadota</taxon>
        <taxon>Gammaproteobacteria</taxon>
        <taxon>Legionellales</taxon>
        <taxon>Coxiellaceae</taxon>
        <taxon>Coxiella</taxon>
    </lineage>
</organism>
<keyword id="KW-0963">Cytoplasm</keyword>
<keyword id="KW-0489">Methyltransferase</keyword>
<keyword id="KW-0949">S-adenosyl-L-methionine</keyword>
<keyword id="KW-0808">Transferase</keyword>
<keyword id="KW-0819">tRNA processing</keyword>
<proteinExistence type="inferred from homology"/>
<dbReference type="EC" id="2.1.1.228" evidence="1"/>
<dbReference type="EMBL" id="CP001019">
    <property type="protein sequence ID" value="ACJ18862.1"/>
    <property type="molecule type" value="Genomic_DNA"/>
</dbReference>
<dbReference type="RefSeq" id="WP_012570322.1">
    <property type="nucleotide sequence ID" value="NC_011527.1"/>
</dbReference>
<dbReference type="SMR" id="B6J1N4"/>
<dbReference type="KEGG" id="cbg:CbuG_1568"/>
<dbReference type="HOGENOM" id="CLU_047363_0_1_6"/>
<dbReference type="GO" id="GO:0005829">
    <property type="term" value="C:cytosol"/>
    <property type="evidence" value="ECO:0007669"/>
    <property type="project" value="TreeGrafter"/>
</dbReference>
<dbReference type="GO" id="GO:0052906">
    <property type="term" value="F:tRNA (guanine(37)-N1)-methyltransferase activity"/>
    <property type="evidence" value="ECO:0007669"/>
    <property type="project" value="UniProtKB-UniRule"/>
</dbReference>
<dbReference type="GO" id="GO:0002939">
    <property type="term" value="P:tRNA N1-guanine methylation"/>
    <property type="evidence" value="ECO:0007669"/>
    <property type="project" value="TreeGrafter"/>
</dbReference>
<dbReference type="CDD" id="cd18080">
    <property type="entry name" value="TrmD-like"/>
    <property type="match status" value="1"/>
</dbReference>
<dbReference type="FunFam" id="1.10.1270.20:FF:000001">
    <property type="entry name" value="tRNA (guanine-N(1)-)-methyltransferase"/>
    <property type="match status" value="1"/>
</dbReference>
<dbReference type="FunFam" id="3.40.1280.10:FF:000001">
    <property type="entry name" value="tRNA (guanine-N(1)-)-methyltransferase"/>
    <property type="match status" value="1"/>
</dbReference>
<dbReference type="Gene3D" id="3.40.1280.10">
    <property type="match status" value="1"/>
</dbReference>
<dbReference type="Gene3D" id="1.10.1270.20">
    <property type="entry name" value="tRNA(m1g37)methyltransferase, domain 2"/>
    <property type="match status" value="1"/>
</dbReference>
<dbReference type="HAMAP" id="MF_00605">
    <property type="entry name" value="TrmD"/>
    <property type="match status" value="1"/>
</dbReference>
<dbReference type="InterPro" id="IPR029028">
    <property type="entry name" value="Alpha/beta_knot_MTases"/>
</dbReference>
<dbReference type="InterPro" id="IPR023148">
    <property type="entry name" value="tRNA_m1G_MeTrfase_C_sf"/>
</dbReference>
<dbReference type="InterPro" id="IPR002649">
    <property type="entry name" value="tRNA_m1G_MeTrfase_TrmD"/>
</dbReference>
<dbReference type="InterPro" id="IPR029026">
    <property type="entry name" value="tRNA_m1G_MTases_N"/>
</dbReference>
<dbReference type="InterPro" id="IPR016009">
    <property type="entry name" value="tRNA_MeTrfase_TRMD/TRM10"/>
</dbReference>
<dbReference type="NCBIfam" id="NF000648">
    <property type="entry name" value="PRK00026.1"/>
    <property type="match status" value="1"/>
</dbReference>
<dbReference type="NCBIfam" id="TIGR00088">
    <property type="entry name" value="trmD"/>
    <property type="match status" value="1"/>
</dbReference>
<dbReference type="PANTHER" id="PTHR46417">
    <property type="entry name" value="TRNA (GUANINE-N(1)-)-METHYLTRANSFERASE"/>
    <property type="match status" value="1"/>
</dbReference>
<dbReference type="PANTHER" id="PTHR46417:SF1">
    <property type="entry name" value="TRNA (GUANINE-N(1)-)-METHYLTRANSFERASE"/>
    <property type="match status" value="1"/>
</dbReference>
<dbReference type="Pfam" id="PF01746">
    <property type="entry name" value="tRNA_m1G_MT"/>
    <property type="match status" value="1"/>
</dbReference>
<dbReference type="PIRSF" id="PIRSF000386">
    <property type="entry name" value="tRNA_mtase"/>
    <property type="match status" value="1"/>
</dbReference>
<dbReference type="SUPFAM" id="SSF75217">
    <property type="entry name" value="alpha/beta knot"/>
    <property type="match status" value="1"/>
</dbReference>
<sequence length="246" mass="27645">MKLIIGVITLFPQMFDALKSGVIGRALKQDRLTLSFWNPRDYATDPHRTVDDRPYGGGPGMVMKFEPLALALKAAKAQLGENTKVIHLTPQGKLLTQAIVREKIHASPLILLAGRYEGIDERLIEAEVDEEWSIGDYILSGGELPAMVLIDAMTRLLPGVLGHKDSASQDSFTAGLLDYSHYTRPEKIADRPVPSVLLSGDHEAISRWRLKQSLGRTWQRRQDLIKRRSLSENEQRLLDEFFEESS</sequence>
<gene>
    <name evidence="1" type="primary">trmD</name>
    <name type="ordered locus">CbuG_1568</name>
</gene>
<evidence type="ECO:0000255" key="1">
    <source>
        <dbReference type="HAMAP-Rule" id="MF_00605"/>
    </source>
</evidence>